<gene>
    <name evidence="1" type="primary">purA</name>
    <name type="ordered locus">BMA10229_A0073</name>
</gene>
<organism>
    <name type="scientific">Burkholderia mallei (strain NCTC 10229)</name>
    <dbReference type="NCBI Taxonomy" id="412022"/>
    <lineage>
        <taxon>Bacteria</taxon>
        <taxon>Pseudomonadati</taxon>
        <taxon>Pseudomonadota</taxon>
        <taxon>Betaproteobacteria</taxon>
        <taxon>Burkholderiales</taxon>
        <taxon>Burkholderiaceae</taxon>
        <taxon>Burkholderia</taxon>
        <taxon>pseudomallei group</taxon>
    </lineage>
</organism>
<dbReference type="EC" id="6.3.4.4" evidence="1"/>
<dbReference type="EMBL" id="CP000546">
    <property type="protein sequence ID" value="ABN01977.1"/>
    <property type="molecule type" value="Genomic_DNA"/>
</dbReference>
<dbReference type="RefSeq" id="WP_004193462.1">
    <property type="nucleotide sequence ID" value="NC_008836.1"/>
</dbReference>
<dbReference type="SMR" id="A2S2B3"/>
<dbReference type="KEGG" id="bml:BMA10229_A0073"/>
<dbReference type="HOGENOM" id="CLU_029848_0_0_4"/>
<dbReference type="UniPathway" id="UPA00075">
    <property type="reaction ID" value="UER00335"/>
</dbReference>
<dbReference type="Proteomes" id="UP000002283">
    <property type="component" value="Chromosome I"/>
</dbReference>
<dbReference type="GO" id="GO:0005737">
    <property type="term" value="C:cytoplasm"/>
    <property type="evidence" value="ECO:0007669"/>
    <property type="project" value="UniProtKB-SubCell"/>
</dbReference>
<dbReference type="GO" id="GO:0004019">
    <property type="term" value="F:adenylosuccinate synthase activity"/>
    <property type="evidence" value="ECO:0007669"/>
    <property type="project" value="UniProtKB-UniRule"/>
</dbReference>
<dbReference type="GO" id="GO:0005525">
    <property type="term" value="F:GTP binding"/>
    <property type="evidence" value="ECO:0007669"/>
    <property type="project" value="UniProtKB-UniRule"/>
</dbReference>
<dbReference type="GO" id="GO:0000287">
    <property type="term" value="F:magnesium ion binding"/>
    <property type="evidence" value="ECO:0007669"/>
    <property type="project" value="UniProtKB-UniRule"/>
</dbReference>
<dbReference type="GO" id="GO:0044208">
    <property type="term" value="P:'de novo' AMP biosynthetic process"/>
    <property type="evidence" value="ECO:0007669"/>
    <property type="project" value="UniProtKB-UniRule"/>
</dbReference>
<dbReference type="GO" id="GO:0046040">
    <property type="term" value="P:IMP metabolic process"/>
    <property type="evidence" value="ECO:0007669"/>
    <property type="project" value="TreeGrafter"/>
</dbReference>
<dbReference type="CDD" id="cd03108">
    <property type="entry name" value="AdSS"/>
    <property type="match status" value="1"/>
</dbReference>
<dbReference type="FunFam" id="1.10.300.10:FF:000001">
    <property type="entry name" value="Adenylosuccinate synthetase"/>
    <property type="match status" value="1"/>
</dbReference>
<dbReference type="FunFam" id="3.90.170.10:FF:000001">
    <property type="entry name" value="Adenylosuccinate synthetase"/>
    <property type="match status" value="1"/>
</dbReference>
<dbReference type="Gene3D" id="3.40.440.10">
    <property type="entry name" value="Adenylosuccinate Synthetase, subunit A, domain 1"/>
    <property type="match status" value="1"/>
</dbReference>
<dbReference type="Gene3D" id="1.10.300.10">
    <property type="entry name" value="Adenylosuccinate Synthetase, subunit A, domain 2"/>
    <property type="match status" value="1"/>
</dbReference>
<dbReference type="Gene3D" id="3.90.170.10">
    <property type="entry name" value="Adenylosuccinate Synthetase, subunit A, domain 3"/>
    <property type="match status" value="1"/>
</dbReference>
<dbReference type="HAMAP" id="MF_00011">
    <property type="entry name" value="Adenylosucc_synth"/>
    <property type="match status" value="1"/>
</dbReference>
<dbReference type="InterPro" id="IPR018220">
    <property type="entry name" value="Adenylosuccin_syn_GTP-bd"/>
</dbReference>
<dbReference type="InterPro" id="IPR033128">
    <property type="entry name" value="Adenylosuccin_syn_Lys_AS"/>
</dbReference>
<dbReference type="InterPro" id="IPR042109">
    <property type="entry name" value="Adenylosuccinate_synth_dom1"/>
</dbReference>
<dbReference type="InterPro" id="IPR042110">
    <property type="entry name" value="Adenylosuccinate_synth_dom2"/>
</dbReference>
<dbReference type="InterPro" id="IPR042111">
    <property type="entry name" value="Adenylosuccinate_synth_dom3"/>
</dbReference>
<dbReference type="InterPro" id="IPR001114">
    <property type="entry name" value="Adenylosuccinate_synthetase"/>
</dbReference>
<dbReference type="InterPro" id="IPR027417">
    <property type="entry name" value="P-loop_NTPase"/>
</dbReference>
<dbReference type="NCBIfam" id="NF002223">
    <property type="entry name" value="PRK01117.1"/>
    <property type="match status" value="1"/>
</dbReference>
<dbReference type="NCBIfam" id="TIGR00184">
    <property type="entry name" value="purA"/>
    <property type="match status" value="1"/>
</dbReference>
<dbReference type="PANTHER" id="PTHR11846">
    <property type="entry name" value="ADENYLOSUCCINATE SYNTHETASE"/>
    <property type="match status" value="1"/>
</dbReference>
<dbReference type="PANTHER" id="PTHR11846:SF0">
    <property type="entry name" value="ADENYLOSUCCINATE SYNTHETASE"/>
    <property type="match status" value="1"/>
</dbReference>
<dbReference type="Pfam" id="PF00709">
    <property type="entry name" value="Adenylsucc_synt"/>
    <property type="match status" value="1"/>
</dbReference>
<dbReference type="SMART" id="SM00788">
    <property type="entry name" value="Adenylsucc_synt"/>
    <property type="match status" value="1"/>
</dbReference>
<dbReference type="SUPFAM" id="SSF52540">
    <property type="entry name" value="P-loop containing nucleoside triphosphate hydrolases"/>
    <property type="match status" value="1"/>
</dbReference>
<dbReference type="PROSITE" id="PS01266">
    <property type="entry name" value="ADENYLOSUCCIN_SYN_1"/>
    <property type="match status" value="1"/>
</dbReference>
<dbReference type="PROSITE" id="PS00513">
    <property type="entry name" value="ADENYLOSUCCIN_SYN_2"/>
    <property type="match status" value="1"/>
</dbReference>
<accession>A2S2B3</accession>
<name>PURA_BURM9</name>
<proteinExistence type="inferred from homology"/>
<sequence>MSASAVNVTPGRNVVVVGTQWGDEGKGKIVDWLTDHAQGVVRFQGGHNAGHTLIIGGKKTILRLIPSGIMREGVACYIGNGVVLSPEALFKEIGELEEAGLSVRERLFISEATTLILPYHIAIDQAREARRGAGKIGTTGRGIGPAYEDKVGRRALRVQDLFDARTFADRLRENLDFHNFVLTQYLGGAAVDFQATLDTMLGYADRLKPMVTDVSRRLYEENHAGRNLLFEGAQGTLLDIDHGTYPFVTSSNCVAGAAAAGAGVGPQKLDYILGITKAYCTRVGSGPFPSELYDADNPSRQDQIGITLANVGKEFGSVTGRPRRTGWLDAAALRRSIQINGVSGLCMTKLDVLDGLDEVKLCVGYKIDGEDVDLLPRGAAEVARCEPVYETFGGWKESTVGIDSWDALPANARAYLTRVQEVAGVPIDMVSTGPDRDETILLRHPFKV</sequence>
<comment type="function">
    <text evidence="1">Plays an important role in the de novo pathway of purine nucleotide biosynthesis. Catalyzes the first committed step in the biosynthesis of AMP from IMP.</text>
</comment>
<comment type="catalytic activity">
    <reaction evidence="1">
        <text>IMP + L-aspartate + GTP = N(6)-(1,2-dicarboxyethyl)-AMP + GDP + phosphate + 2 H(+)</text>
        <dbReference type="Rhea" id="RHEA:15753"/>
        <dbReference type="ChEBI" id="CHEBI:15378"/>
        <dbReference type="ChEBI" id="CHEBI:29991"/>
        <dbReference type="ChEBI" id="CHEBI:37565"/>
        <dbReference type="ChEBI" id="CHEBI:43474"/>
        <dbReference type="ChEBI" id="CHEBI:57567"/>
        <dbReference type="ChEBI" id="CHEBI:58053"/>
        <dbReference type="ChEBI" id="CHEBI:58189"/>
        <dbReference type="EC" id="6.3.4.4"/>
    </reaction>
</comment>
<comment type="cofactor">
    <cofactor evidence="1">
        <name>Mg(2+)</name>
        <dbReference type="ChEBI" id="CHEBI:18420"/>
    </cofactor>
    <text evidence="1">Binds 1 Mg(2+) ion per subunit.</text>
</comment>
<comment type="pathway">
    <text evidence="1">Purine metabolism; AMP biosynthesis via de novo pathway; AMP from IMP: step 1/2.</text>
</comment>
<comment type="subunit">
    <text evidence="1">Homodimer.</text>
</comment>
<comment type="subcellular location">
    <subcellularLocation>
        <location evidence="1">Cytoplasm</location>
    </subcellularLocation>
</comment>
<comment type="similarity">
    <text evidence="1">Belongs to the adenylosuccinate synthetase family.</text>
</comment>
<feature type="chain" id="PRO_1000000787" description="Adenylosuccinate synthetase">
    <location>
        <begin position="1"/>
        <end position="448"/>
    </location>
</feature>
<feature type="active site" description="Proton acceptor" evidence="1">
    <location>
        <position position="23"/>
    </location>
</feature>
<feature type="active site" description="Proton donor" evidence="1">
    <location>
        <position position="51"/>
    </location>
</feature>
<feature type="binding site" evidence="1">
    <location>
        <begin position="22"/>
        <end position="28"/>
    </location>
    <ligand>
        <name>GTP</name>
        <dbReference type="ChEBI" id="CHEBI:37565"/>
    </ligand>
</feature>
<feature type="binding site" description="in other chain" evidence="1">
    <location>
        <begin position="23"/>
        <end position="26"/>
    </location>
    <ligand>
        <name>IMP</name>
        <dbReference type="ChEBI" id="CHEBI:58053"/>
        <note>ligand shared between dimeric partners</note>
    </ligand>
</feature>
<feature type="binding site" evidence="1">
    <location>
        <position position="23"/>
    </location>
    <ligand>
        <name>Mg(2+)</name>
        <dbReference type="ChEBI" id="CHEBI:18420"/>
    </ligand>
</feature>
<feature type="binding site" description="in other chain" evidence="1">
    <location>
        <begin position="48"/>
        <end position="51"/>
    </location>
    <ligand>
        <name>IMP</name>
        <dbReference type="ChEBI" id="CHEBI:58053"/>
        <note>ligand shared between dimeric partners</note>
    </ligand>
</feature>
<feature type="binding site" evidence="1">
    <location>
        <begin position="50"/>
        <end position="52"/>
    </location>
    <ligand>
        <name>GTP</name>
        <dbReference type="ChEBI" id="CHEBI:37565"/>
    </ligand>
</feature>
<feature type="binding site" evidence="1">
    <location>
        <position position="50"/>
    </location>
    <ligand>
        <name>Mg(2+)</name>
        <dbReference type="ChEBI" id="CHEBI:18420"/>
    </ligand>
</feature>
<feature type="binding site" description="in other chain" evidence="1">
    <location>
        <position position="139"/>
    </location>
    <ligand>
        <name>IMP</name>
        <dbReference type="ChEBI" id="CHEBI:58053"/>
        <note>ligand shared between dimeric partners</note>
    </ligand>
</feature>
<feature type="binding site" evidence="1">
    <location>
        <position position="153"/>
    </location>
    <ligand>
        <name>IMP</name>
        <dbReference type="ChEBI" id="CHEBI:58053"/>
        <note>ligand shared between dimeric partners</note>
    </ligand>
</feature>
<feature type="binding site" description="in other chain" evidence="1">
    <location>
        <position position="234"/>
    </location>
    <ligand>
        <name>IMP</name>
        <dbReference type="ChEBI" id="CHEBI:58053"/>
        <note>ligand shared between dimeric partners</note>
    </ligand>
</feature>
<feature type="binding site" description="in other chain" evidence="1">
    <location>
        <position position="249"/>
    </location>
    <ligand>
        <name>IMP</name>
        <dbReference type="ChEBI" id="CHEBI:58053"/>
        <note>ligand shared between dimeric partners</note>
    </ligand>
</feature>
<feature type="binding site" evidence="1">
    <location>
        <begin position="317"/>
        <end position="323"/>
    </location>
    <ligand>
        <name>substrate</name>
    </ligand>
</feature>
<feature type="binding site" description="in other chain" evidence="1">
    <location>
        <position position="321"/>
    </location>
    <ligand>
        <name>IMP</name>
        <dbReference type="ChEBI" id="CHEBI:58053"/>
        <note>ligand shared between dimeric partners</note>
    </ligand>
</feature>
<feature type="binding site" evidence="1">
    <location>
        <position position="323"/>
    </location>
    <ligand>
        <name>GTP</name>
        <dbReference type="ChEBI" id="CHEBI:37565"/>
    </ligand>
</feature>
<feature type="binding site" evidence="1">
    <location>
        <begin position="349"/>
        <end position="351"/>
    </location>
    <ligand>
        <name>GTP</name>
        <dbReference type="ChEBI" id="CHEBI:37565"/>
    </ligand>
</feature>
<feature type="binding site" evidence="1">
    <location>
        <begin position="431"/>
        <end position="433"/>
    </location>
    <ligand>
        <name>GTP</name>
        <dbReference type="ChEBI" id="CHEBI:37565"/>
    </ligand>
</feature>
<evidence type="ECO:0000255" key="1">
    <source>
        <dbReference type="HAMAP-Rule" id="MF_00011"/>
    </source>
</evidence>
<reference key="1">
    <citation type="journal article" date="2010" name="Genome Biol. Evol.">
        <title>Continuing evolution of Burkholderia mallei through genome reduction and large-scale rearrangements.</title>
        <authorList>
            <person name="Losada L."/>
            <person name="Ronning C.M."/>
            <person name="DeShazer D."/>
            <person name="Woods D."/>
            <person name="Fedorova N."/>
            <person name="Kim H.S."/>
            <person name="Shabalina S.A."/>
            <person name="Pearson T.R."/>
            <person name="Brinkac L."/>
            <person name="Tan P."/>
            <person name="Nandi T."/>
            <person name="Crabtree J."/>
            <person name="Badger J."/>
            <person name="Beckstrom-Sternberg S."/>
            <person name="Saqib M."/>
            <person name="Schutzer S.E."/>
            <person name="Keim P."/>
            <person name="Nierman W.C."/>
        </authorList>
    </citation>
    <scope>NUCLEOTIDE SEQUENCE [LARGE SCALE GENOMIC DNA]</scope>
    <source>
        <strain>NCTC 10229</strain>
    </source>
</reference>
<protein>
    <recommendedName>
        <fullName evidence="1">Adenylosuccinate synthetase</fullName>
        <shortName evidence="1">AMPSase</shortName>
        <shortName evidence="1">AdSS</shortName>
        <ecNumber evidence="1">6.3.4.4</ecNumber>
    </recommendedName>
    <alternativeName>
        <fullName evidence="1">IMP--aspartate ligase</fullName>
    </alternativeName>
</protein>
<keyword id="KW-0963">Cytoplasm</keyword>
<keyword id="KW-0342">GTP-binding</keyword>
<keyword id="KW-0436">Ligase</keyword>
<keyword id="KW-0460">Magnesium</keyword>
<keyword id="KW-0479">Metal-binding</keyword>
<keyword id="KW-0547">Nucleotide-binding</keyword>
<keyword id="KW-0658">Purine biosynthesis</keyword>